<accession>Q8VEH8</accession>
<accession>Q3UZF3</accession>
<accession>Q8BVN6</accession>
<name>ERLEC_MOUSE</name>
<proteinExistence type="evidence at protein level"/>
<keyword id="KW-1015">Disulfide bond</keyword>
<keyword id="KW-0256">Endoplasmic reticulum</keyword>
<keyword id="KW-0325">Glycoprotein</keyword>
<keyword id="KW-1185">Reference proteome</keyword>
<keyword id="KW-0677">Repeat</keyword>
<keyword id="KW-0732">Signal</keyword>
<gene>
    <name type="primary">Erlec1</name>
</gene>
<protein>
    <recommendedName>
        <fullName>Endoplasmic reticulum lectin 1</fullName>
    </recommendedName>
    <alternativeName>
        <fullName>ER lectin</fullName>
        <shortName>Erlectin</shortName>
    </alternativeName>
</protein>
<reference key="1">
    <citation type="journal article" date="2005" name="Science">
        <title>The transcriptional landscape of the mammalian genome.</title>
        <authorList>
            <person name="Carninci P."/>
            <person name="Kasukawa T."/>
            <person name="Katayama S."/>
            <person name="Gough J."/>
            <person name="Frith M.C."/>
            <person name="Maeda N."/>
            <person name="Oyama R."/>
            <person name="Ravasi T."/>
            <person name="Lenhard B."/>
            <person name="Wells C."/>
            <person name="Kodzius R."/>
            <person name="Shimokawa K."/>
            <person name="Bajic V.B."/>
            <person name="Brenner S.E."/>
            <person name="Batalov S."/>
            <person name="Forrest A.R."/>
            <person name="Zavolan M."/>
            <person name="Davis M.J."/>
            <person name="Wilming L.G."/>
            <person name="Aidinis V."/>
            <person name="Allen J.E."/>
            <person name="Ambesi-Impiombato A."/>
            <person name="Apweiler R."/>
            <person name="Aturaliya R.N."/>
            <person name="Bailey T.L."/>
            <person name="Bansal M."/>
            <person name="Baxter L."/>
            <person name="Beisel K.W."/>
            <person name="Bersano T."/>
            <person name="Bono H."/>
            <person name="Chalk A.M."/>
            <person name="Chiu K.P."/>
            <person name="Choudhary V."/>
            <person name="Christoffels A."/>
            <person name="Clutterbuck D.R."/>
            <person name="Crowe M.L."/>
            <person name="Dalla E."/>
            <person name="Dalrymple B.P."/>
            <person name="de Bono B."/>
            <person name="Della Gatta G."/>
            <person name="di Bernardo D."/>
            <person name="Down T."/>
            <person name="Engstrom P."/>
            <person name="Fagiolini M."/>
            <person name="Faulkner G."/>
            <person name="Fletcher C.F."/>
            <person name="Fukushima T."/>
            <person name="Furuno M."/>
            <person name="Futaki S."/>
            <person name="Gariboldi M."/>
            <person name="Georgii-Hemming P."/>
            <person name="Gingeras T.R."/>
            <person name="Gojobori T."/>
            <person name="Green R.E."/>
            <person name="Gustincich S."/>
            <person name="Harbers M."/>
            <person name="Hayashi Y."/>
            <person name="Hensch T.K."/>
            <person name="Hirokawa N."/>
            <person name="Hill D."/>
            <person name="Huminiecki L."/>
            <person name="Iacono M."/>
            <person name="Ikeo K."/>
            <person name="Iwama A."/>
            <person name="Ishikawa T."/>
            <person name="Jakt M."/>
            <person name="Kanapin A."/>
            <person name="Katoh M."/>
            <person name="Kawasawa Y."/>
            <person name="Kelso J."/>
            <person name="Kitamura H."/>
            <person name="Kitano H."/>
            <person name="Kollias G."/>
            <person name="Krishnan S.P."/>
            <person name="Kruger A."/>
            <person name="Kummerfeld S.K."/>
            <person name="Kurochkin I.V."/>
            <person name="Lareau L.F."/>
            <person name="Lazarevic D."/>
            <person name="Lipovich L."/>
            <person name="Liu J."/>
            <person name="Liuni S."/>
            <person name="McWilliam S."/>
            <person name="Madan Babu M."/>
            <person name="Madera M."/>
            <person name="Marchionni L."/>
            <person name="Matsuda H."/>
            <person name="Matsuzawa S."/>
            <person name="Miki H."/>
            <person name="Mignone F."/>
            <person name="Miyake S."/>
            <person name="Morris K."/>
            <person name="Mottagui-Tabar S."/>
            <person name="Mulder N."/>
            <person name="Nakano N."/>
            <person name="Nakauchi H."/>
            <person name="Ng P."/>
            <person name="Nilsson R."/>
            <person name="Nishiguchi S."/>
            <person name="Nishikawa S."/>
            <person name="Nori F."/>
            <person name="Ohara O."/>
            <person name="Okazaki Y."/>
            <person name="Orlando V."/>
            <person name="Pang K.C."/>
            <person name="Pavan W.J."/>
            <person name="Pavesi G."/>
            <person name="Pesole G."/>
            <person name="Petrovsky N."/>
            <person name="Piazza S."/>
            <person name="Reed J."/>
            <person name="Reid J.F."/>
            <person name="Ring B.Z."/>
            <person name="Ringwald M."/>
            <person name="Rost B."/>
            <person name="Ruan Y."/>
            <person name="Salzberg S.L."/>
            <person name="Sandelin A."/>
            <person name="Schneider C."/>
            <person name="Schoenbach C."/>
            <person name="Sekiguchi K."/>
            <person name="Semple C.A."/>
            <person name="Seno S."/>
            <person name="Sessa L."/>
            <person name="Sheng Y."/>
            <person name="Shibata Y."/>
            <person name="Shimada H."/>
            <person name="Shimada K."/>
            <person name="Silva D."/>
            <person name="Sinclair B."/>
            <person name="Sperling S."/>
            <person name="Stupka E."/>
            <person name="Sugiura K."/>
            <person name="Sultana R."/>
            <person name="Takenaka Y."/>
            <person name="Taki K."/>
            <person name="Tammoja K."/>
            <person name="Tan S.L."/>
            <person name="Tang S."/>
            <person name="Taylor M.S."/>
            <person name="Tegner J."/>
            <person name="Teichmann S.A."/>
            <person name="Ueda H.R."/>
            <person name="van Nimwegen E."/>
            <person name="Verardo R."/>
            <person name="Wei C.L."/>
            <person name="Yagi K."/>
            <person name="Yamanishi H."/>
            <person name="Zabarovsky E."/>
            <person name="Zhu S."/>
            <person name="Zimmer A."/>
            <person name="Hide W."/>
            <person name="Bult C."/>
            <person name="Grimmond S.M."/>
            <person name="Teasdale R.D."/>
            <person name="Liu E.T."/>
            <person name="Brusic V."/>
            <person name="Quackenbush J."/>
            <person name="Wahlestedt C."/>
            <person name="Mattick J.S."/>
            <person name="Hume D.A."/>
            <person name="Kai C."/>
            <person name="Sasaki D."/>
            <person name="Tomaru Y."/>
            <person name="Fukuda S."/>
            <person name="Kanamori-Katayama M."/>
            <person name="Suzuki M."/>
            <person name="Aoki J."/>
            <person name="Arakawa T."/>
            <person name="Iida J."/>
            <person name="Imamura K."/>
            <person name="Itoh M."/>
            <person name="Kato T."/>
            <person name="Kawaji H."/>
            <person name="Kawagashira N."/>
            <person name="Kawashima T."/>
            <person name="Kojima M."/>
            <person name="Kondo S."/>
            <person name="Konno H."/>
            <person name="Nakano K."/>
            <person name="Ninomiya N."/>
            <person name="Nishio T."/>
            <person name="Okada M."/>
            <person name="Plessy C."/>
            <person name="Shibata K."/>
            <person name="Shiraki T."/>
            <person name="Suzuki S."/>
            <person name="Tagami M."/>
            <person name="Waki K."/>
            <person name="Watahiki A."/>
            <person name="Okamura-Oho Y."/>
            <person name="Suzuki H."/>
            <person name="Kawai J."/>
            <person name="Hayashizaki Y."/>
        </authorList>
    </citation>
    <scope>NUCLEOTIDE SEQUENCE [LARGE SCALE MRNA]</scope>
    <source>
        <strain>C57BL/6J</strain>
        <tissue>Testis</tissue>
    </source>
</reference>
<reference key="2">
    <citation type="journal article" date="2009" name="PLoS Biol.">
        <title>Lineage-specific biology revealed by a finished genome assembly of the mouse.</title>
        <authorList>
            <person name="Church D.M."/>
            <person name="Goodstadt L."/>
            <person name="Hillier L.W."/>
            <person name="Zody M.C."/>
            <person name="Goldstein S."/>
            <person name="She X."/>
            <person name="Bult C.J."/>
            <person name="Agarwala R."/>
            <person name="Cherry J.L."/>
            <person name="DiCuccio M."/>
            <person name="Hlavina W."/>
            <person name="Kapustin Y."/>
            <person name="Meric P."/>
            <person name="Maglott D."/>
            <person name="Birtle Z."/>
            <person name="Marques A.C."/>
            <person name="Graves T."/>
            <person name="Zhou S."/>
            <person name="Teague B."/>
            <person name="Potamousis K."/>
            <person name="Churas C."/>
            <person name="Place M."/>
            <person name="Herschleb J."/>
            <person name="Runnheim R."/>
            <person name="Forrest D."/>
            <person name="Amos-Landgraf J."/>
            <person name="Schwartz D.C."/>
            <person name="Cheng Z."/>
            <person name="Lindblad-Toh K."/>
            <person name="Eichler E.E."/>
            <person name="Ponting C.P."/>
        </authorList>
    </citation>
    <scope>NUCLEOTIDE SEQUENCE [LARGE SCALE GENOMIC DNA]</scope>
    <source>
        <strain>C57BL/6J</strain>
    </source>
</reference>
<reference key="3">
    <citation type="journal article" date="2004" name="Genome Res.">
        <title>The status, quality, and expansion of the NIH full-length cDNA project: the Mammalian Gene Collection (MGC).</title>
        <authorList>
            <consortium name="The MGC Project Team"/>
        </authorList>
    </citation>
    <scope>NUCLEOTIDE SEQUENCE [LARGE SCALE MRNA]</scope>
    <source>
        <strain>Czech II</strain>
        <tissue>Mammary tumor</tissue>
    </source>
</reference>
<reference key="4">
    <citation type="journal article" date="2010" name="Cell">
        <title>A tissue-specific atlas of mouse protein phosphorylation and expression.</title>
        <authorList>
            <person name="Huttlin E.L."/>
            <person name="Jedrychowski M.P."/>
            <person name="Elias J.E."/>
            <person name="Goswami T."/>
            <person name="Rad R."/>
            <person name="Beausoleil S.A."/>
            <person name="Villen J."/>
            <person name="Haas W."/>
            <person name="Sowa M.E."/>
            <person name="Gygi S.P."/>
        </authorList>
    </citation>
    <scope>IDENTIFICATION BY MASS SPECTROMETRY [LARGE SCALE ANALYSIS]</scope>
    <source>
        <tissue>Brown adipose tissue</tissue>
        <tissue>Heart</tissue>
        <tissue>Liver</tissue>
        <tissue>Lung</tissue>
        <tissue>Pancreas</tissue>
        <tissue>Spleen</tissue>
        <tissue>Testis</tissue>
    </source>
</reference>
<dbReference type="EMBL" id="AK077120">
    <property type="protein sequence ID" value="BAC36623.1"/>
    <property type="molecule type" value="mRNA"/>
</dbReference>
<dbReference type="EMBL" id="AK133874">
    <property type="protein sequence ID" value="BAE21904.1"/>
    <property type="molecule type" value="mRNA"/>
</dbReference>
<dbReference type="EMBL" id="AL662891">
    <property type="status" value="NOT_ANNOTATED_CDS"/>
    <property type="molecule type" value="Genomic_DNA"/>
</dbReference>
<dbReference type="EMBL" id="BC018468">
    <property type="protein sequence ID" value="AAH18468.1"/>
    <property type="molecule type" value="mRNA"/>
</dbReference>
<dbReference type="CCDS" id="CCDS24509.1"/>
<dbReference type="RefSeq" id="NP_080021.3">
    <property type="nucleotide sequence ID" value="NM_025745.3"/>
</dbReference>
<dbReference type="SMR" id="Q8VEH8"/>
<dbReference type="FunCoup" id="Q8VEH8">
    <property type="interactions" value="2796"/>
</dbReference>
<dbReference type="STRING" id="10090.ENSMUSP00000072929"/>
<dbReference type="GlyCosmos" id="Q8VEH8">
    <property type="glycosylation" value="1 site, No reported glycans"/>
</dbReference>
<dbReference type="GlyGen" id="Q8VEH8">
    <property type="glycosylation" value="1 site, 1 N-linked glycan (1 site)"/>
</dbReference>
<dbReference type="PhosphoSitePlus" id="Q8VEH8"/>
<dbReference type="SwissPalm" id="Q8VEH8"/>
<dbReference type="PaxDb" id="10090-ENSMUSP00000072929"/>
<dbReference type="PeptideAtlas" id="Q8VEH8"/>
<dbReference type="ProteomicsDB" id="275472"/>
<dbReference type="Pumba" id="Q8VEH8"/>
<dbReference type="Antibodypedia" id="30214">
    <property type="antibodies" value="41 antibodies from 14 providers"/>
</dbReference>
<dbReference type="DNASU" id="66753"/>
<dbReference type="Ensembl" id="ENSMUST00000073192.14">
    <property type="protein sequence ID" value="ENSMUSP00000072929.8"/>
    <property type="gene ID" value="ENSMUSG00000020311.18"/>
</dbReference>
<dbReference type="GeneID" id="66753"/>
<dbReference type="KEGG" id="mmu:66753"/>
<dbReference type="UCSC" id="uc007iic.1">
    <property type="organism name" value="mouse"/>
</dbReference>
<dbReference type="AGR" id="MGI:1914003"/>
<dbReference type="CTD" id="27248"/>
<dbReference type="MGI" id="MGI:1914003">
    <property type="gene designation" value="Erlec1"/>
</dbReference>
<dbReference type="VEuPathDB" id="HostDB:ENSMUSG00000020311"/>
<dbReference type="eggNOG" id="KOG3394">
    <property type="taxonomic scope" value="Eukaryota"/>
</dbReference>
<dbReference type="GeneTree" id="ENSGT00530000063603"/>
<dbReference type="HOGENOM" id="CLU_048035_1_0_1"/>
<dbReference type="InParanoid" id="Q8VEH8"/>
<dbReference type="OMA" id="HGKDDIY"/>
<dbReference type="OrthoDB" id="239053at2759"/>
<dbReference type="PhylomeDB" id="Q8VEH8"/>
<dbReference type="TreeFam" id="TF314309"/>
<dbReference type="Reactome" id="R-MMU-382556">
    <property type="pathway name" value="ABC-family proteins mediated transport"/>
</dbReference>
<dbReference type="Reactome" id="R-MMU-5358346">
    <property type="pathway name" value="Hedgehog ligand biogenesis"/>
</dbReference>
<dbReference type="BioGRID-ORCS" id="66753">
    <property type="hits" value="2 hits in 77 CRISPR screens"/>
</dbReference>
<dbReference type="ChiTaRS" id="Erlec1">
    <property type="organism name" value="mouse"/>
</dbReference>
<dbReference type="PRO" id="PR:Q8VEH8"/>
<dbReference type="Proteomes" id="UP000000589">
    <property type="component" value="Chromosome 11"/>
</dbReference>
<dbReference type="RNAct" id="Q8VEH8">
    <property type="molecule type" value="protein"/>
</dbReference>
<dbReference type="Bgee" id="ENSMUSG00000020311">
    <property type="expression patterns" value="Expressed in seminal vesicle and 255 other cell types or tissues"/>
</dbReference>
<dbReference type="ExpressionAtlas" id="Q8VEH8">
    <property type="expression patterns" value="baseline and differential"/>
</dbReference>
<dbReference type="GO" id="GO:0005788">
    <property type="term" value="C:endoplasmic reticulum lumen"/>
    <property type="evidence" value="ECO:0000250"/>
    <property type="project" value="UniProtKB"/>
</dbReference>
<dbReference type="GO" id="GO:0051082">
    <property type="term" value="F:unfolded protein binding"/>
    <property type="evidence" value="ECO:0007669"/>
    <property type="project" value="Ensembl"/>
</dbReference>
<dbReference type="GO" id="GO:0030968">
    <property type="term" value="P:endoplasmic reticulum unfolded protein response"/>
    <property type="evidence" value="ECO:0007669"/>
    <property type="project" value="InterPro"/>
</dbReference>
<dbReference type="GO" id="GO:0036503">
    <property type="term" value="P:ERAD pathway"/>
    <property type="evidence" value="ECO:0000250"/>
    <property type="project" value="UniProtKB"/>
</dbReference>
<dbReference type="GO" id="GO:1904153">
    <property type="term" value="P:negative regulation of retrograde protein transport, ER to cytosol"/>
    <property type="evidence" value="ECO:0007669"/>
    <property type="project" value="Ensembl"/>
</dbReference>
<dbReference type="FunFam" id="2.70.130.10:FF:000001">
    <property type="entry name" value="Endoplasmic reticulum lectin 1"/>
    <property type="match status" value="1"/>
</dbReference>
<dbReference type="FunFam" id="2.70.130.10:FF:000003">
    <property type="entry name" value="Endoplasmic reticulum lectin 1"/>
    <property type="match status" value="1"/>
</dbReference>
<dbReference type="Gene3D" id="2.70.130.10">
    <property type="entry name" value="Mannose-6-phosphate receptor binding domain"/>
    <property type="match status" value="2"/>
</dbReference>
<dbReference type="InterPro" id="IPR009011">
    <property type="entry name" value="Man6P_isomerase_rcpt-bd_dom_sf"/>
</dbReference>
<dbReference type="InterPro" id="IPR044865">
    <property type="entry name" value="MRH_dom"/>
</dbReference>
<dbReference type="InterPro" id="IPR045149">
    <property type="entry name" value="OS-9-like"/>
</dbReference>
<dbReference type="InterPro" id="IPR012913">
    <property type="entry name" value="OS9-like_dom"/>
</dbReference>
<dbReference type="PANTHER" id="PTHR15414:SF0">
    <property type="entry name" value="ENDOPLASMIC RETICULUM LECTIN 1"/>
    <property type="match status" value="1"/>
</dbReference>
<dbReference type="PANTHER" id="PTHR15414">
    <property type="entry name" value="OS-9-RELATED"/>
    <property type="match status" value="1"/>
</dbReference>
<dbReference type="Pfam" id="PF07915">
    <property type="entry name" value="PRKCSH"/>
    <property type="match status" value="2"/>
</dbReference>
<dbReference type="SUPFAM" id="SSF50911">
    <property type="entry name" value="Mannose 6-phosphate receptor domain"/>
    <property type="match status" value="2"/>
</dbReference>
<dbReference type="PROSITE" id="PS51914">
    <property type="entry name" value="MRH"/>
    <property type="match status" value="2"/>
</dbReference>
<feature type="signal peptide" evidence="2">
    <location>
        <begin position="1"/>
        <end position="33"/>
    </location>
</feature>
<feature type="chain" id="PRO_0000042183" description="Endoplasmic reticulum lectin 1">
    <location>
        <begin position="34"/>
        <end position="483"/>
    </location>
</feature>
<feature type="domain" description="MRH 1" evidence="3">
    <location>
        <begin position="111"/>
        <end position="246"/>
    </location>
</feature>
<feature type="domain" description="MRH 2" evidence="3">
    <location>
        <begin position="342"/>
        <end position="469"/>
    </location>
</feature>
<feature type="glycosylation site" description="N-linked (GlcNAc...) asparagine" evidence="2">
    <location>
        <position position="195"/>
    </location>
</feature>
<feature type="disulfide bond" evidence="3">
    <location>
        <begin position="113"/>
        <end position="126"/>
    </location>
</feature>
<feature type="disulfide bond" evidence="3">
    <location>
        <begin position="199"/>
        <end position="232"/>
    </location>
</feature>
<feature type="disulfide bond" evidence="3">
    <location>
        <begin position="215"/>
        <end position="244"/>
    </location>
</feature>
<feature type="disulfide bond" evidence="3">
    <location>
        <begin position="344"/>
        <end position="357"/>
    </location>
</feature>
<feature type="disulfide bond" evidence="3">
    <location>
        <begin position="421"/>
        <end position="455"/>
    </location>
</feature>
<feature type="disulfide bond" evidence="3">
    <location>
        <begin position="436"/>
        <end position="467"/>
    </location>
</feature>
<feature type="sequence conflict" description="In Ref. 1; BAC36623." evidence="4" ref="1">
    <original>S</original>
    <variation>T</variation>
    <location>
        <position position="10"/>
    </location>
</feature>
<sequence>MEEGDGGLRSLVPGGPLLLVLYGLLEASGGGRALPQLSDDIPFRVNWPGTEFSLPTTGVLYKEDNYIIMTTAHKEKYKCILPLVTSGDEEEEKDYKGPNPRELLEPLFKQSSCSYRIESYWTYEVCHGKHIRQYHEEKETGQKVNIHEYYLGNMLAKNLLYEKEREAKENEKSNEIPTKNIEGQMTPYYPVGMGNGTPCSLKQNRPRSSTVMYICHPESKHEILSVAEVTTCEYEVVILTPLLCSHPKYKFRASPVNDIFCQSLPGSPFKPLTLRQLEQQEEILRVPFRRNKEEDLPSAKEERFPAIHKPIAVGSQPVLTVGTTHISKLTDDQLIKEFLSGSYCFHGGVGWWKYEFCYGKHVHQYHEDKDNGKTSVVVGTWNQEEHVEWAKKNTARAYHLQDDGTQTVRMVSHFYGNGDICDITDKPRQVTVKLKCKESDSPHAVTVYMLEPHSCQYILGVESPVICKILDTADENGLLSLPN</sequence>
<comment type="function">
    <text evidence="1">Probable lectin that binds selectively to improperly folded lumenal proteins. May function in endoplasmic reticulum quality control and endoplasmic reticulum-associated degradation (ERAD) of both non-glycosylated proteins and glycoproteins (By similarity).</text>
</comment>
<comment type="subunit">
    <text evidence="1">May form a complex with OS9, HSPA5, SYVN1, and SEL1L with which it interacts directly. Interacts (via PRKCSH 2 domain) with KREMEN2 (when glycosylated). Interacts with HSPA5 (By similarity).</text>
</comment>
<comment type="subcellular location">
    <subcellularLocation>
        <location evidence="1">Endoplasmic reticulum lumen</location>
    </subcellularLocation>
</comment>
<comment type="PTM">
    <text evidence="1">N-glycosylated.</text>
</comment>
<organism>
    <name type="scientific">Mus musculus</name>
    <name type="common">Mouse</name>
    <dbReference type="NCBI Taxonomy" id="10090"/>
    <lineage>
        <taxon>Eukaryota</taxon>
        <taxon>Metazoa</taxon>
        <taxon>Chordata</taxon>
        <taxon>Craniata</taxon>
        <taxon>Vertebrata</taxon>
        <taxon>Euteleostomi</taxon>
        <taxon>Mammalia</taxon>
        <taxon>Eutheria</taxon>
        <taxon>Euarchontoglires</taxon>
        <taxon>Glires</taxon>
        <taxon>Rodentia</taxon>
        <taxon>Myomorpha</taxon>
        <taxon>Muroidea</taxon>
        <taxon>Muridae</taxon>
        <taxon>Murinae</taxon>
        <taxon>Mus</taxon>
        <taxon>Mus</taxon>
    </lineage>
</organism>
<evidence type="ECO:0000250" key="1"/>
<evidence type="ECO:0000255" key="2"/>
<evidence type="ECO:0000255" key="3">
    <source>
        <dbReference type="PROSITE-ProRule" id="PRU01262"/>
    </source>
</evidence>
<evidence type="ECO:0000305" key="4"/>